<proteinExistence type="inferred from homology"/>
<feature type="chain" id="PRO_0000076319" description="Glycerol dehydrogenase small subunit">
    <location>
        <begin position="1"/>
        <end position="126"/>
    </location>
</feature>
<feature type="transmembrane region" description="Helical" evidence="2">
    <location>
        <begin position="13"/>
        <end position="33"/>
    </location>
</feature>
<feature type="transmembrane region" description="Helical" evidence="2">
    <location>
        <begin position="41"/>
        <end position="61"/>
    </location>
</feature>
<feature type="transmembrane region" description="Helical" evidence="2">
    <location>
        <begin position="67"/>
        <end position="87"/>
    </location>
</feature>
<feature type="transmembrane region" description="Helical" evidence="2">
    <location>
        <begin position="92"/>
        <end position="112"/>
    </location>
</feature>
<protein>
    <recommendedName>
        <fullName>Glycerol dehydrogenase small subunit</fullName>
        <ecNumber>1.1.99.22</ecNumber>
    </recommendedName>
    <alternativeName>
        <fullName>D-arabitol dehydrogenase small subunit</fullName>
        <shortName>ARDH</shortName>
    </alternativeName>
    <alternativeName>
        <fullName>D-sorbitol dehydrogenase subunit SldB</fullName>
        <shortName>SLDH</shortName>
    </alternativeName>
    <alternativeName>
        <fullName>Gluconate/polyol dehydrogenase small subunit</fullName>
    </alternativeName>
</protein>
<organism>
    <name type="scientific">Gluconobacter oxydans (strain 621H)</name>
    <name type="common">Gluconobacter suboxydans</name>
    <dbReference type="NCBI Taxonomy" id="290633"/>
    <lineage>
        <taxon>Bacteria</taxon>
        <taxon>Pseudomonadati</taxon>
        <taxon>Pseudomonadota</taxon>
        <taxon>Alphaproteobacteria</taxon>
        <taxon>Acetobacterales</taxon>
        <taxon>Acetobacteraceae</taxon>
        <taxon>Gluconobacter</taxon>
    </lineage>
</organism>
<sequence>MPNTYGSRTLTEWLTLVLGVVIILVGLFFVIAGADLAMLGGSVYYVICGIPLVAGGVFMLMGRTLGAFLYLGALAYTWVWSLWEVGFSPVDLLPRDFGPTLLGILVALTIPVLRRMETRRTLRGTV</sequence>
<keyword id="KW-1003">Cell membrane</keyword>
<keyword id="KW-0472">Membrane</keyword>
<keyword id="KW-0560">Oxidoreductase</keyword>
<keyword id="KW-1185">Reference proteome</keyword>
<keyword id="KW-0812">Transmembrane</keyword>
<keyword id="KW-1133">Transmembrane helix</keyword>
<dbReference type="EC" id="1.1.99.22"/>
<dbReference type="EMBL" id="AJ577472">
    <property type="protein sequence ID" value="CAE12057.1"/>
    <property type="molecule type" value="Genomic_DNA"/>
</dbReference>
<dbReference type="EMBL" id="CP000009">
    <property type="protein sequence ID" value="AAW60629.1"/>
    <property type="molecule type" value="Genomic_DNA"/>
</dbReference>
<dbReference type="RefSeq" id="WP_011252425.1">
    <property type="nucleotide sequence ID" value="NZ_LT900338.1"/>
</dbReference>
<dbReference type="STRING" id="290633.GOX0855"/>
<dbReference type="KEGG" id="gox:GOX0855"/>
<dbReference type="eggNOG" id="COG4993">
    <property type="taxonomic scope" value="Bacteria"/>
</dbReference>
<dbReference type="HOGENOM" id="CLU_146618_0_0_5"/>
<dbReference type="BRENDA" id="1.1.1.69">
    <property type="organism ID" value="38"/>
</dbReference>
<dbReference type="BRENDA" id="1.1.99.21">
    <property type="organism ID" value="38"/>
</dbReference>
<dbReference type="Proteomes" id="UP000006375">
    <property type="component" value="Chromosome"/>
</dbReference>
<dbReference type="GO" id="GO:0005886">
    <property type="term" value="C:plasma membrane"/>
    <property type="evidence" value="ECO:0007669"/>
    <property type="project" value="UniProtKB-SubCell"/>
</dbReference>
<dbReference type="GO" id="GO:0047955">
    <property type="term" value="F:glycerol dehydrogenase (acceptor) activity"/>
    <property type="evidence" value="ECO:0007669"/>
    <property type="project" value="UniProtKB-EC"/>
</dbReference>
<gene>
    <name type="primary">sldB</name>
    <name type="synonym">g5dhA</name>
    <name type="ordered locus">GOX0855</name>
</gene>
<comment type="function">
    <text evidence="1">Catalyzes the oxidation of glycerol to glycerone. Also acts, more slowly, on a number of other polyols including D-sorbitol, D-arabinitol, D-mannitol, meso-erythritol, adonitol and propylene glycol (By similarity).</text>
</comment>
<comment type="catalytic activity">
    <reaction>
        <text>glycerol + A = dihydroxyacetone + AH2</text>
        <dbReference type="Rhea" id="RHEA:17493"/>
        <dbReference type="ChEBI" id="CHEBI:13193"/>
        <dbReference type="ChEBI" id="CHEBI:16016"/>
        <dbReference type="ChEBI" id="CHEBI:17499"/>
        <dbReference type="ChEBI" id="CHEBI:17754"/>
        <dbReference type="EC" id="1.1.99.22"/>
    </reaction>
</comment>
<comment type="subcellular location">
    <subcellularLocation>
        <location evidence="3">Cell membrane</location>
        <topology evidence="3">Multi-pass membrane protein</topology>
    </subcellularLocation>
</comment>
<reference key="1">
    <citation type="journal article" date="2004" name="Appl. Microbiol. Biotechnol.">
        <title>Cloning of a gluconate/polyol dehydrogenase gene from Gluconobacter suboxydans IFO 12528, characterisation of the enzyme and its use for the production of 5-ketogluconate in a recombinant Escherichia coli strain.</title>
        <authorList>
            <person name="Salusjaervi T."/>
            <person name="Povelainen M."/>
            <person name="Hvorslev N."/>
            <person name="Eneyskaya E.E."/>
            <person name="Kulminskaya A.A."/>
            <person name="Shabalin K.A."/>
            <person name="Neustroev K.N."/>
            <person name="Kalkkinen N."/>
            <person name="Miasnikov A.N."/>
        </authorList>
    </citation>
    <scope>NUCLEOTIDE SEQUENCE [GENOMIC DNA]</scope>
    <source>
        <strain>ATCC 621 / DSM 50049 / NBRC 3172 / NCIMB 7069 / NRRL B-72</strain>
    </source>
</reference>
<reference key="2">
    <citation type="journal article" date="2005" name="Nat. Biotechnol.">
        <title>Complete genome sequence of the acetic acid bacterium Gluconobacter oxydans.</title>
        <authorList>
            <person name="Prust C."/>
            <person name="Hoffmeister M."/>
            <person name="Liesegang H."/>
            <person name="Wiezer A."/>
            <person name="Fricke W.F."/>
            <person name="Ehrenreich A."/>
            <person name="Gottschalk G."/>
            <person name="Deppenmeier U."/>
        </authorList>
    </citation>
    <scope>NUCLEOTIDE SEQUENCE [LARGE SCALE GENOMIC DNA]</scope>
    <source>
        <strain>621H</strain>
    </source>
</reference>
<evidence type="ECO:0000250" key="1"/>
<evidence type="ECO:0000255" key="2"/>
<evidence type="ECO:0000305" key="3"/>
<name>SLDB_GLUOX</name>
<accession>Q70JP0</accession>
<accession>Q5FSL7</accession>